<gene>
    <name type="primary">mak</name>
    <name type="ordered locus">Mflv_1087</name>
</gene>
<sequence length="430" mass="46834">MTLAFGEWIIHRRWYAGRTRELASAQPAAVTALGDGLDHVLLDVAYTDGFTERYQILVQWESAPVDRYGEAALIGTSSGPDGTRFAYDALFNPEAASRLLRLINSSETVGELTFSREPDVTLPVDAPAKVSGAEQSNTSVIFGKDAMLKVFRRVTPGINPDIELNRVLARAGNPRVATLLGSFETSSCALGMVTAFAANSAEGWDMATASVHDLFANEVGGDFADESRRLGEAVASVHATLAGALGTSVAEFPIDTVLDRLRVATQAAPELAPYAPRIEERFRRLAERPIQVHRVHGDLHLGQVLRTPESWLLIDFEGEPGQPLEDRRRPDSPLRDVAGVLRSFEYAAYQQVVTGGGDAQMAERARSWVDRNVDAFCAGYAAVAGEDPRASGDVLAAYELDKAVYEAAYEARFRPSWLPIPMRSIQRLVS</sequence>
<organism>
    <name type="scientific">Mycolicibacterium gilvum (strain PYR-GCK)</name>
    <name type="common">Mycobacterium gilvum (strain PYR-GCK)</name>
    <dbReference type="NCBI Taxonomy" id="350054"/>
    <lineage>
        <taxon>Bacteria</taxon>
        <taxon>Bacillati</taxon>
        <taxon>Actinomycetota</taxon>
        <taxon>Actinomycetes</taxon>
        <taxon>Mycobacteriales</taxon>
        <taxon>Mycobacteriaceae</taxon>
        <taxon>Mycolicibacterium</taxon>
    </lineage>
</organism>
<protein>
    <recommendedName>
        <fullName>Maltokinase</fullName>
        <shortName>MaK</shortName>
        <ecNumber>2.7.1.175</ecNumber>
    </recommendedName>
    <alternativeName>
        <fullName>Maltose-1-phosphate synthase</fullName>
    </alternativeName>
</protein>
<proteinExistence type="inferred from homology"/>
<evidence type="ECO:0000250" key="1"/>
<evidence type="ECO:0000305" key="2"/>
<dbReference type="EC" id="2.7.1.175"/>
<dbReference type="EMBL" id="CP000656">
    <property type="protein sequence ID" value="ABP43569.1"/>
    <property type="molecule type" value="Genomic_DNA"/>
</dbReference>
<dbReference type="SMR" id="A4T432"/>
<dbReference type="STRING" id="350054.Mflv_1087"/>
<dbReference type="KEGG" id="mgi:Mflv_1087"/>
<dbReference type="eggNOG" id="COG3281">
    <property type="taxonomic scope" value="Bacteria"/>
</dbReference>
<dbReference type="HOGENOM" id="CLU_029675_0_0_11"/>
<dbReference type="OrthoDB" id="3787729at2"/>
<dbReference type="UniPathway" id="UPA00164"/>
<dbReference type="GO" id="GO:0005524">
    <property type="term" value="F:ATP binding"/>
    <property type="evidence" value="ECO:0007669"/>
    <property type="project" value="UniProtKB-KW"/>
</dbReference>
<dbReference type="GO" id="GO:0016301">
    <property type="term" value="F:kinase activity"/>
    <property type="evidence" value="ECO:0007669"/>
    <property type="project" value="UniProtKB-KW"/>
</dbReference>
<dbReference type="GO" id="GO:0046835">
    <property type="term" value="P:carbohydrate phosphorylation"/>
    <property type="evidence" value="ECO:0000250"/>
    <property type="project" value="UniProtKB"/>
</dbReference>
<dbReference type="GO" id="GO:0005978">
    <property type="term" value="P:glycogen biosynthetic process"/>
    <property type="evidence" value="ECO:0007669"/>
    <property type="project" value="UniProtKB-UniPathway"/>
</dbReference>
<dbReference type="GO" id="GO:0005992">
    <property type="term" value="P:trehalose biosynthetic process"/>
    <property type="evidence" value="ECO:0000250"/>
    <property type="project" value="UniProtKB"/>
</dbReference>
<dbReference type="FunFam" id="3.90.1200.10:FF:000010">
    <property type="entry name" value="Maltokinase"/>
    <property type="match status" value="1"/>
</dbReference>
<dbReference type="Gene3D" id="3.90.1200.10">
    <property type="match status" value="1"/>
</dbReference>
<dbReference type="InterPro" id="IPR011009">
    <property type="entry name" value="Kinase-like_dom_sf"/>
</dbReference>
<dbReference type="InterPro" id="IPR040999">
    <property type="entry name" value="Mak_N_cap"/>
</dbReference>
<dbReference type="Pfam" id="PF18085">
    <property type="entry name" value="Mak_N_cap"/>
    <property type="match status" value="1"/>
</dbReference>
<dbReference type="SUPFAM" id="SSF56112">
    <property type="entry name" value="Protein kinase-like (PK-like)"/>
    <property type="match status" value="1"/>
</dbReference>
<keyword id="KW-0067">ATP-binding</keyword>
<keyword id="KW-0119">Carbohydrate metabolism</keyword>
<keyword id="KW-0320">Glycogen biosynthesis</keyword>
<keyword id="KW-0321">Glycogen metabolism</keyword>
<keyword id="KW-0418">Kinase</keyword>
<keyword id="KW-0547">Nucleotide-binding</keyword>
<keyword id="KW-0808">Transferase</keyword>
<comment type="function">
    <text evidence="1">Catalyzes the ATP-dependent phosphorylation of maltose to maltose 1-phosphate. Is involved in a branched alpha-glucan biosynthetic pathway from trehalose, together with TreS, GlgE and GlgB (By similarity).</text>
</comment>
<comment type="catalytic activity">
    <reaction>
        <text>D-maltose + ATP = alpha-maltose 1-phosphate + ADP + H(+)</text>
        <dbReference type="Rhea" id="RHEA:31915"/>
        <dbReference type="ChEBI" id="CHEBI:15378"/>
        <dbReference type="ChEBI" id="CHEBI:17306"/>
        <dbReference type="ChEBI" id="CHEBI:30616"/>
        <dbReference type="ChEBI" id="CHEBI:63576"/>
        <dbReference type="ChEBI" id="CHEBI:456216"/>
        <dbReference type="EC" id="2.7.1.175"/>
    </reaction>
</comment>
<comment type="pathway">
    <text>Glycan biosynthesis; glycogen biosynthesis.</text>
</comment>
<comment type="subunit">
    <text evidence="1">Monomer.</text>
</comment>
<comment type="similarity">
    <text evidence="2">Belongs to the aminoglycoside phosphotransferase family.</text>
</comment>
<accession>A4T432</accession>
<feature type="chain" id="PRO_0000412886" description="Maltokinase">
    <location>
        <begin position="1"/>
        <end position="430"/>
    </location>
</feature>
<reference key="1">
    <citation type="submission" date="2007-04" db="EMBL/GenBank/DDBJ databases">
        <title>Complete sequence of chromosome of Mycobacterium gilvum PYR-GCK.</title>
        <authorList>
            <consortium name="US DOE Joint Genome Institute"/>
            <person name="Copeland A."/>
            <person name="Lucas S."/>
            <person name="Lapidus A."/>
            <person name="Barry K."/>
            <person name="Detter J.C."/>
            <person name="Glavina del Rio T."/>
            <person name="Hammon N."/>
            <person name="Israni S."/>
            <person name="Dalin E."/>
            <person name="Tice H."/>
            <person name="Pitluck S."/>
            <person name="Chain P."/>
            <person name="Malfatti S."/>
            <person name="Shin M."/>
            <person name="Vergez L."/>
            <person name="Schmutz J."/>
            <person name="Larimer F."/>
            <person name="Land M."/>
            <person name="Hauser L."/>
            <person name="Kyrpides N."/>
            <person name="Mikhailova N."/>
            <person name="Miller C."/>
            <person name="Richardson P."/>
        </authorList>
    </citation>
    <scope>NUCLEOTIDE SEQUENCE [LARGE SCALE GENOMIC DNA]</scope>
    <source>
        <strain>PYR-GCK</strain>
    </source>
</reference>
<name>MAK_MYCGI</name>